<dbReference type="EMBL" id="AF144333">
    <property type="protein sequence ID" value="AAG43302.1"/>
    <property type="molecule type" value="Genomic_DNA"/>
</dbReference>
<dbReference type="GO" id="GO:0009507">
    <property type="term" value="C:chloroplast"/>
    <property type="evidence" value="ECO:0007669"/>
    <property type="project" value="UniProtKB-SubCell"/>
</dbReference>
<dbReference type="GO" id="GO:0003723">
    <property type="term" value="F:RNA binding"/>
    <property type="evidence" value="ECO:0007669"/>
    <property type="project" value="UniProtKB-KW"/>
</dbReference>
<dbReference type="GO" id="GO:0006397">
    <property type="term" value="P:mRNA processing"/>
    <property type="evidence" value="ECO:0007669"/>
    <property type="project" value="UniProtKB-KW"/>
</dbReference>
<dbReference type="GO" id="GO:0008380">
    <property type="term" value="P:RNA splicing"/>
    <property type="evidence" value="ECO:0007669"/>
    <property type="project" value="UniProtKB-UniRule"/>
</dbReference>
<dbReference type="GO" id="GO:0008033">
    <property type="term" value="P:tRNA processing"/>
    <property type="evidence" value="ECO:0007669"/>
    <property type="project" value="UniProtKB-KW"/>
</dbReference>
<dbReference type="HAMAP" id="MF_01390">
    <property type="entry name" value="MatK"/>
    <property type="match status" value="1"/>
</dbReference>
<dbReference type="InterPro" id="IPR024937">
    <property type="entry name" value="Domain_X"/>
</dbReference>
<dbReference type="InterPro" id="IPR002866">
    <property type="entry name" value="Maturase_MatK"/>
</dbReference>
<dbReference type="InterPro" id="IPR024942">
    <property type="entry name" value="Maturase_MatK_N"/>
</dbReference>
<dbReference type="PANTHER" id="PTHR34811">
    <property type="entry name" value="MATURASE K"/>
    <property type="match status" value="1"/>
</dbReference>
<dbReference type="PANTHER" id="PTHR34811:SF1">
    <property type="entry name" value="MATURASE K"/>
    <property type="match status" value="1"/>
</dbReference>
<dbReference type="Pfam" id="PF01348">
    <property type="entry name" value="Intron_maturas2"/>
    <property type="match status" value="1"/>
</dbReference>
<dbReference type="Pfam" id="PF01824">
    <property type="entry name" value="MatK_N"/>
    <property type="match status" value="1"/>
</dbReference>
<feature type="chain" id="PRO_0000143250" description="Maturase K">
    <location>
        <begin position="1"/>
        <end position="504"/>
    </location>
</feature>
<geneLocation type="chloroplast"/>
<reference key="1">
    <citation type="submission" date="1999-04" db="EMBL/GenBank/DDBJ databases">
        <title>Evolutionary analysis of plastidic maturase K and nuclear chalcone synthase and their utility for phylogenetic reconstructions within the Brassicaceae.</title>
        <authorList>
            <person name="Koch M."/>
            <person name="Mitchell-Olds T."/>
        </authorList>
    </citation>
    <scope>NUCLEOTIDE SEQUENCE [GENOMIC DNA]</scope>
</reference>
<evidence type="ECO:0000255" key="1">
    <source>
        <dbReference type="HAMAP-Rule" id="MF_01390"/>
    </source>
</evidence>
<proteinExistence type="inferred from homology"/>
<protein>
    <recommendedName>
        <fullName evidence="1">Maturase K</fullName>
    </recommendedName>
    <alternativeName>
        <fullName evidence="1">Intron maturase</fullName>
    </alternativeName>
</protein>
<gene>
    <name evidence="1" type="primary">matK</name>
</gene>
<organism>
    <name type="scientific">Turritis glabra</name>
    <name type="common">Tower mustard</name>
    <name type="synonym">Arabis glabra</name>
    <dbReference type="NCBI Taxonomy" id="63678"/>
    <lineage>
        <taxon>Eukaryota</taxon>
        <taxon>Viridiplantae</taxon>
        <taxon>Streptophyta</taxon>
        <taxon>Embryophyta</taxon>
        <taxon>Tracheophyta</taxon>
        <taxon>Spermatophyta</taxon>
        <taxon>Magnoliopsida</taxon>
        <taxon>eudicotyledons</taxon>
        <taxon>Gunneridae</taxon>
        <taxon>Pentapetalae</taxon>
        <taxon>rosids</taxon>
        <taxon>malvids</taxon>
        <taxon>Brassicales</taxon>
        <taxon>Brassicaceae</taxon>
        <taxon>Turritideae</taxon>
        <taxon>Turritis</taxon>
    </lineage>
</organism>
<name>MATK_TURGL</name>
<sequence length="504" mass="60314">MDKFQGYLEFDGVRQQSFLYPLFFREYIYVLAYDHGLNRLNRNRSIFLENTDYDKKYSSLIVKRLILRMYEQNRLIIPTKDLNQNSFLGHTSLFYYQMISVLFAVIVEIPFSLRLGSSFQGKQLKKSYNLQSIHSIFPFLEDKLAHFNYVLDVLIPYPIHLEILVQTLRYRVKDASSLHXFRFCLYEYCNWKNFYKKKKPILNPRFFLFLYNSHVCEYESIFFFLRKRSSHLRSTSYEVLFERILFYGKIQHFLKVFVNNFPAILGLLKDPFIHYVRYHGRCILATKDTPLLMNKWKYYFVNLWQCYFSVWFQSHKVNINKLSKDNLEFLGYLSSLRLNPLVVRSQMLENSFLIDNVRIKLDSKIPISSIIGSLAKDKFCNVLGHPISKATWTDSSDSDILNRFVRICRNISHYYSGSSKKKNLYRIKYILRLCCVKTLARKHKSTVRAFLKRLGSGLLEEFLTGEDQVLSLIFPRSYYASKRLYRVRIWYLDILYLNDLVNHE</sequence>
<accession>Q9GF59</accession>
<keyword id="KW-0150">Chloroplast</keyword>
<keyword id="KW-0507">mRNA processing</keyword>
<keyword id="KW-0934">Plastid</keyword>
<keyword id="KW-0694">RNA-binding</keyword>
<keyword id="KW-0819">tRNA processing</keyword>
<comment type="function">
    <text evidence="1">Usually encoded in the trnK tRNA gene intron. Probably assists in splicing its own and other chloroplast group II introns.</text>
</comment>
<comment type="subcellular location">
    <subcellularLocation>
        <location>Plastid</location>
        <location>Chloroplast</location>
    </subcellularLocation>
</comment>
<comment type="similarity">
    <text evidence="1">Belongs to the intron maturase 2 family. MatK subfamily.</text>
</comment>